<protein>
    <recommendedName>
        <fullName>Protein FMP52, mitochondrial</fullName>
    </recommendedName>
</protein>
<sequence>MNALVVGATGLCGAAILKHAAEATSFNKVYALVRRQIPNSAARVETIVNEQSDSWPESVPAGVDVFFSGLGTTRANAGGLENQYKVDHDLNIAVAKAAKERGCRVCVIVSAIGASVNARLPYNKLKGDIERDLLALEFERTVILRPGVLLGERETHHKGFGNSVAVFLGKLVYRGRFQALLGYPVYGDEVGQVAVALALSDDKSKVRIVESAEILSLVKQENTQ</sequence>
<comment type="subcellular location">
    <subcellularLocation>
        <location evidence="1">Mitochondrion outer membrane</location>
        <topology evidence="1">Peripheral membrane protein</topology>
    </subcellularLocation>
</comment>
<comment type="similarity">
    <text evidence="2">Belongs to the FMP52 family.</text>
</comment>
<feature type="transit peptide" description="Mitochondrion">
    <location>
        <begin position="1"/>
        <end position="44"/>
    </location>
</feature>
<feature type="chain" id="PRO_0000301810" description="Protein FMP52, mitochondrial">
    <location>
        <begin position="45"/>
        <end position="224"/>
    </location>
</feature>
<evidence type="ECO:0000250" key="1"/>
<evidence type="ECO:0000305" key="2"/>
<keyword id="KW-0472">Membrane</keyword>
<keyword id="KW-0496">Mitochondrion</keyword>
<keyword id="KW-1000">Mitochondrion outer membrane</keyword>
<keyword id="KW-1185">Reference proteome</keyword>
<keyword id="KW-0809">Transit peptide</keyword>
<organism>
    <name type="scientific">Eremothecium gossypii (strain ATCC 10895 / CBS 109.51 / FGSC 9923 / NRRL Y-1056)</name>
    <name type="common">Yeast</name>
    <name type="synonym">Ashbya gossypii</name>
    <dbReference type="NCBI Taxonomy" id="284811"/>
    <lineage>
        <taxon>Eukaryota</taxon>
        <taxon>Fungi</taxon>
        <taxon>Dikarya</taxon>
        <taxon>Ascomycota</taxon>
        <taxon>Saccharomycotina</taxon>
        <taxon>Saccharomycetes</taxon>
        <taxon>Saccharomycetales</taxon>
        <taxon>Saccharomycetaceae</taxon>
        <taxon>Eremothecium</taxon>
    </lineage>
</organism>
<gene>
    <name type="primary">FMP52</name>
    <name type="ordered locus">ADR005W</name>
</gene>
<proteinExistence type="inferred from homology"/>
<accession>Q75AB3</accession>
<reference key="1">
    <citation type="journal article" date="2004" name="Science">
        <title>The Ashbya gossypii genome as a tool for mapping the ancient Saccharomyces cerevisiae genome.</title>
        <authorList>
            <person name="Dietrich F.S."/>
            <person name="Voegeli S."/>
            <person name="Brachat S."/>
            <person name="Lerch A."/>
            <person name="Gates K."/>
            <person name="Steiner S."/>
            <person name="Mohr C."/>
            <person name="Poehlmann R."/>
            <person name="Luedi P."/>
            <person name="Choi S."/>
            <person name="Wing R.A."/>
            <person name="Flavier A."/>
            <person name="Gaffney T.D."/>
            <person name="Philippsen P."/>
        </authorList>
    </citation>
    <scope>NUCLEOTIDE SEQUENCE [LARGE SCALE GENOMIC DNA]</scope>
    <source>
        <strain>ATCC 10895 / CBS 109.51 / FGSC 9923 / NRRL Y-1056</strain>
    </source>
</reference>
<reference key="2">
    <citation type="journal article" date="2013" name="G3 (Bethesda)">
        <title>Genomes of Ashbya fungi isolated from insects reveal four mating-type loci, numerous translocations, lack of transposons, and distinct gene duplications.</title>
        <authorList>
            <person name="Dietrich F.S."/>
            <person name="Voegeli S."/>
            <person name="Kuo S."/>
            <person name="Philippsen P."/>
        </authorList>
    </citation>
    <scope>GENOME REANNOTATION</scope>
    <source>
        <strain>ATCC 10895 / CBS 109.51 / FGSC 9923 / NRRL Y-1056</strain>
    </source>
</reference>
<name>FMP52_EREGS</name>
<dbReference type="EMBL" id="AE016817">
    <property type="protein sequence ID" value="AAS51925.1"/>
    <property type="molecule type" value="Genomic_DNA"/>
</dbReference>
<dbReference type="RefSeq" id="NP_984101.1">
    <property type="nucleotide sequence ID" value="NM_209454.1"/>
</dbReference>
<dbReference type="SMR" id="Q75AB3"/>
<dbReference type="FunCoup" id="Q75AB3">
    <property type="interactions" value="107"/>
</dbReference>
<dbReference type="STRING" id="284811.Q75AB3"/>
<dbReference type="EnsemblFungi" id="AAS51925">
    <property type="protein sequence ID" value="AAS51925"/>
    <property type="gene ID" value="AGOS_ADR005W"/>
</dbReference>
<dbReference type="GeneID" id="4620249"/>
<dbReference type="KEGG" id="ago:AGOS_ADR005W"/>
<dbReference type="eggNOG" id="KOG4039">
    <property type="taxonomic scope" value="Eukaryota"/>
</dbReference>
<dbReference type="HOGENOM" id="CLU_071330_2_2_1"/>
<dbReference type="InParanoid" id="Q75AB3"/>
<dbReference type="OMA" id="CIENAKA"/>
<dbReference type="OrthoDB" id="430436at2759"/>
<dbReference type="Proteomes" id="UP000000591">
    <property type="component" value="Chromosome IV"/>
</dbReference>
<dbReference type="GO" id="GO:0005737">
    <property type="term" value="C:cytoplasm"/>
    <property type="evidence" value="ECO:0000318"/>
    <property type="project" value="GO_Central"/>
</dbReference>
<dbReference type="GO" id="GO:0005741">
    <property type="term" value="C:mitochondrial outer membrane"/>
    <property type="evidence" value="ECO:0007669"/>
    <property type="project" value="UniProtKB-SubCell"/>
</dbReference>
<dbReference type="GO" id="GO:0051170">
    <property type="term" value="P:import into nucleus"/>
    <property type="evidence" value="ECO:0000318"/>
    <property type="project" value="GO_Central"/>
</dbReference>
<dbReference type="FunFam" id="3.40.50.720:FF:000366">
    <property type="entry name" value="Protein FMP52, mitochondrial"/>
    <property type="match status" value="1"/>
</dbReference>
<dbReference type="Gene3D" id="3.40.50.720">
    <property type="entry name" value="NAD(P)-binding Rossmann-like Domain"/>
    <property type="match status" value="1"/>
</dbReference>
<dbReference type="InterPro" id="IPR016040">
    <property type="entry name" value="NAD(P)-bd_dom"/>
</dbReference>
<dbReference type="InterPro" id="IPR036291">
    <property type="entry name" value="NAD(P)-bd_dom_sf"/>
</dbReference>
<dbReference type="PANTHER" id="PTHR14097">
    <property type="entry name" value="OXIDOREDUCTASE HTATIP2"/>
    <property type="match status" value="1"/>
</dbReference>
<dbReference type="PANTHER" id="PTHR14097:SF7">
    <property type="entry name" value="OXIDOREDUCTASE HTATIP2"/>
    <property type="match status" value="1"/>
</dbReference>
<dbReference type="Pfam" id="PF13460">
    <property type="entry name" value="NAD_binding_10"/>
    <property type="match status" value="1"/>
</dbReference>
<dbReference type="SUPFAM" id="SSF51735">
    <property type="entry name" value="NAD(P)-binding Rossmann-fold domains"/>
    <property type="match status" value="1"/>
</dbReference>